<name>TVP18_YEAST</name>
<feature type="chain" id="PRO_0000203281" description="Golgi apparatus membrane protein TVP18">
    <location>
        <begin position="1"/>
        <end position="167"/>
    </location>
</feature>
<feature type="transmembrane region" description="Helical" evidence="1">
    <location>
        <begin position="23"/>
        <end position="43"/>
    </location>
</feature>
<feature type="transmembrane region" description="Helical" evidence="1">
    <location>
        <begin position="49"/>
        <end position="69"/>
    </location>
</feature>
<feature type="transmembrane region" description="Helical" evidence="1">
    <location>
        <begin position="98"/>
        <end position="114"/>
    </location>
</feature>
<feature type="transmembrane region" description="Helical" evidence="1">
    <location>
        <begin position="121"/>
        <end position="137"/>
    </location>
</feature>
<feature type="modified residue" description="Phosphothreonine" evidence="7">
    <location>
        <position position="146"/>
    </location>
</feature>
<feature type="modified residue" description="Phosphothreonine" evidence="6 7">
    <location>
        <position position="153"/>
    </location>
</feature>
<feature type="glycosylation site" description="N-linked (GlcNAc...) asparagine" evidence="1">
    <location>
        <position position="22"/>
    </location>
</feature>
<dbReference type="EMBL" id="Z48952">
    <property type="protein sequence ID" value="CAA88796.1"/>
    <property type="molecule type" value="Genomic_DNA"/>
</dbReference>
<dbReference type="EMBL" id="AY558402">
    <property type="protein sequence ID" value="AAS56728.1"/>
    <property type="molecule type" value="Genomic_DNA"/>
</dbReference>
<dbReference type="EMBL" id="BK006946">
    <property type="protein sequence ID" value="DAA09969.1"/>
    <property type="molecule type" value="Genomic_DNA"/>
</dbReference>
<dbReference type="PIR" id="S52831">
    <property type="entry name" value="S52831"/>
</dbReference>
<dbReference type="RefSeq" id="NP_013787.1">
    <property type="nucleotide sequence ID" value="NM_001182569.1"/>
</dbReference>
<dbReference type="BioGRID" id="35246">
    <property type="interactions" value="103"/>
</dbReference>
<dbReference type="DIP" id="DIP-1731N"/>
<dbReference type="FunCoup" id="Q04767">
    <property type="interactions" value="82"/>
</dbReference>
<dbReference type="IntAct" id="Q04767">
    <property type="interactions" value="32"/>
</dbReference>
<dbReference type="MINT" id="Q04767"/>
<dbReference type="STRING" id="4932.YMR071C"/>
<dbReference type="GlyCosmos" id="Q04767">
    <property type="glycosylation" value="1 site, No reported glycans"/>
</dbReference>
<dbReference type="GlyGen" id="Q04767">
    <property type="glycosylation" value="1 site"/>
</dbReference>
<dbReference type="iPTMnet" id="Q04767"/>
<dbReference type="SwissPalm" id="Q04767"/>
<dbReference type="PaxDb" id="4932-YMR071C"/>
<dbReference type="PeptideAtlas" id="Q04767"/>
<dbReference type="EnsemblFungi" id="YMR071C_mRNA">
    <property type="protein sequence ID" value="YMR071C"/>
    <property type="gene ID" value="YMR071C"/>
</dbReference>
<dbReference type="GeneID" id="855093"/>
<dbReference type="KEGG" id="sce:YMR071C"/>
<dbReference type="AGR" id="SGD:S000004675"/>
<dbReference type="SGD" id="S000004675">
    <property type="gene designation" value="TVP18"/>
</dbReference>
<dbReference type="VEuPathDB" id="FungiDB:YMR071C"/>
<dbReference type="eggNOG" id="ENOG502S3AC">
    <property type="taxonomic scope" value="Eukaryota"/>
</dbReference>
<dbReference type="HOGENOM" id="CLU_118698_1_0_1"/>
<dbReference type="InParanoid" id="Q04767"/>
<dbReference type="OMA" id="IYAQWLG"/>
<dbReference type="OrthoDB" id="5591789at2759"/>
<dbReference type="BioCyc" id="YEAST:G3O-32773-MONOMER"/>
<dbReference type="BioGRID-ORCS" id="855093">
    <property type="hits" value="0 hits in 10 CRISPR screens"/>
</dbReference>
<dbReference type="PRO" id="PR:Q04767"/>
<dbReference type="Proteomes" id="UP000002311">
    <property type="component" value="Chromosome XIII"/>
</dbReference>
<dbReference type="RNAct" id="Q04767">
    <property type="molecule type" value="protein"/>
</dbReference>
<dbReference type="GO" id="GO:0000139">
    <property type="term" value="C:Golgi membrane"/>
    <property type="evidence" value="ECO:0000314"/>
    <property type="project" value="SGD"/>
</dbReference>
<dbReference type="GO" id="GO:0016192">
    <property type="term" value="P:vesicle-mediated transport"/>
    <property type="evidence" value="ECO:0000316"/>
    <property type="project" value="SGD"/>
</dbReference>
<dbReference type="InterPro" id="IPR019365">
    <property type="entry name" value="TVP18/Ca-channel_flower"/>
</dbReference>
<dbReference type="PANTHER" id="PTHR13314">
    <property type="entry name" value="CALCIUM CHANNEL FLOWER HOMOLOG"/>
    <property type="match status" value="1"/>
</dbReference>
<dbReference type="PANTHER" id="PTHR13314:SF2">
    <property type="entry name" value="CALCIUM CHANNEL FLOWER HOMOLOG"/>
    <property type="match status" value="1"/>
</dbReference>
<dbReference type="Pfam" id="PF10233">
    <property type="entry name" value="Cg6151-P"/>
    <property type="match status" value="1"/>
</dbReference>
<dbReference type="SMART" id="SM01077">
    <property type="entry name" value="Cg6151-P"/>
    <property type="match status" value="1"/>
</dbReference>
<comment type="function">
    <text evidence="4">Golgi membrane protein involved in vesicular trafficking.</text>
</comment>
<comment type="subunit">
    <text evidence="4">Interacts with TVP15 and YIP4.</text>
</comment>
<comment type="subcellular location">
    <subcellularLocation>
        <location evidence="2 3 4">Golgi apparatus membrane</location>
        <topology evidence="2 3 4">Multi-pass membrane protein</topology>
    </subcellularLocation>
</comment>
<comment type="similarity">
    <text evidence="5">Belongs to the TVP18 family.</text>
</comment>
<keyword id="KW-0325">Glycoprotein</keyword>
<keyword id="KW-0333">Golgi apparatus</keyword>
<keyword id="KW-0472">Membrane</keyword>
<keyword id="KW-0597">Phosphoprotein</keyword>
<keyword id="KW-1185">Reference proteome</keyword>
<keyword id="KW-0812">Transmembrane</keyword>
<keyword id="KW-1133">Transmembrane helix</keyword>
<gene>
    <name type="primary">TVP18</name>
    <name type="ordered locus">YMR071C</name>
    <name type="ORF">YM9916.10C</name>
</gene>
<organism>
    <name type="scientific">Saccharomyces cerevisiae (strain ATCC 204508 / S288c)</name>
    <name type="common">Baker's yeast</name>
    <dbReference type="NCBI Taxonomy" id="559292"/>
    <lineage>
        <taxon>Eukaryota</taxon>
        <taxon>Fungi</taxon>
        <taxon>Dikarya</taxon>
        <taxon>Ascomycota</taxon>
        <taxon>Saccharomycotina</taxon>
        <taxon>Saccharomycetes</taxon>
        <taxon>Saccharomycetales</taxon>
        <taxon>Saccharomycetaceae</taxon>
        <taxon>Saccharomyces</taxon>
    </lineage>
</organism>
<accession>Q04767</accession>
<accession>D6VZP5</accession>
<evidence type="ECO:0000255" key="1"/>
<evidence type="ECO:0000269" key="2">
    <source>
    </source>
</evidence>
<evidence type="ECO:0000269" key="3">
    <source>
    </source>
</evidence>
<evidence type="ECO:0000269" key="4">
    <source>
    </source>
</evidence>
<evidence type="ECO:0000305" key="5"/>
<evidence type="ECO:0007744" key="6">
    <source>
    </source>
</evidence>
<evidence type="ECO:0007744" key="7">
    <source>
    </source>
</evidence>
<reference key="1">
    <citation type="journal article" date="1997" name="Nature">
        <title>The nucleotide sequence of Saccharomyces cerevisiae chromosome XIII.</title>
        <authorList>
            <person name="Bowman S."/>
            <person name="Churcher C.M."/>
            <person name="Badcock K."/>
            <person name="Brown D."/>
            <person name="Chillingworth T."/>
            <person name="Connor R."/>
            <person name="Dedman K."/>
            <person name="Devlin K."/>
            <person name="Gentles S."/>
            <person name="Hamlin N."/>
            <person name="Hunt S."/>
            <person name="Jagels K."/>
            <person name="Lye G."/>
            <person name="Moule S."/>
            <person name="Odell C."/>
            <person name="Pearson D."/>
            <person name="Rajandream M.A."/>
            <person name="Rice P."/>
            <person name="Skelton J."/>
            <person name="Walsh S.V."/>
            <person name="Whitehead S."/>
            <person name="Barrell B.G."/>
        </authorList>
    </citation>
    <scope>NUCLEOTIDE SEQUENCE [LARGE SCALE GENOMIC DNA]</scope>
    <source>
        <strain>ATCC 204508 / S288c</strain>
    </source>
</reference>
<reference key="2">
    <citation type="journal article" date="2014" name="G3 (Bethesda)">
        <title>The reference genome sequence of Saccharomyces cerevisiae: Then and now.</title>
        <authorList>
            <person name="Engel S.R."/>
            <person name="Dietrich F.S."/>
            <person name="Fisk D.G."/>
            <person name="Binkley G."/>
            <person name="Balakrishnan R."/>
            <person name="Costanzo M.C."/>
            <person name="Dwight S.S."/>
            <person name="Hitz B.C."/>
            <person name="Karra K."/>
            <person name="Nash R.S."/>
            <person name="Weng S."/>
            <person name="Wong E.D."/>
            <person name="Lloyd P."/>
            <person name="Skrzypek M.S."/>
            <person name="Miyasato S.R."/>
            <person name="Simison M."/>
            <person name="Cherry J.M."/>
        </authorList>
    </citation>
    <scope>GENOME REANNOTATION</scope>
    <source>
        <strain>ATCC 204508 / S288c</strain>
    </source>
</reference>
<reference key="3">
    <citation type="journal article" date="2007" name="Genome Res.">
        <title>Approaching a complete repository of sequence-verified protein-encoding clones for Saccharomyces cerevisiae.</title>
        <authorList>
            <person name="Hu Y."/>
            <person name="Rolfs A."/>
            <person name="Bhullar B."/>
            <person name="Murthy T.V.S."/>
            <person name="Zhu C."/>
            <person name="Berger M.F."/>
            <person name="Camargo A.A."/>
            <person name="Kelley F."/>
            <person name="McCarron S."/>
            <person name="Jepson D."/>
            <person name="Richardson A."/>
            <person name="Raphael J."/>
            <person name="Moreira D."/>
            <person name="Taycher E."/>
            <person name="Zuo D."/>
            <person name="Mohr S."/>
            <person name="Kane M.F."/>
            <person name="Williamson J."/>
            <person name="Simpson A.J.G."/>
            <person name="Bulyk M.L."/>
            <person name="Harlow E."/>
            <person name="Marsischky G."/>
            <person name="Kolodner R.D."/>
            <person name="LaBaer J."/>
        </authorList>
    </citation>
    <scope>NUCLEOTIDE SEQUENCE [GENOMIC DNA]</scope>
    <source>
        <strain>ATCC 204508 / S288c</strain>
    </source>
</reference>
<reference key="4">
    <citation type="journal article" date="2003" name="Nature">
        <title>Global analysis of protein localization in budding yeast.</title>
        <authorList>
            <person name="Huh W.-K."/>
            <person name="Falvo J.V."/>
            <person name="Gerke L.C."/>
            <person name="Carroll A.S."/>
            <person name="Howson R.W."/>
            <person name="Weissman J.S."/>
            <person name="O'Shea E.K."/>
        </authorList>
    </citation>
    <scope>SUBCELLULAR LOCATION [LARGE SCALE ANALYSIS]</scope>
</reference>
<reference key="5">
    <citation type="journal article" date="2005" name="Mol. Cell. Biol.">
        <title>Immunoisolation of the yeast Golgi subcompartments and characterization of a novel membrane protein, Svp26, discovered in the Sed5-containing compartments.</title>
        <authorList>
            <person name="Inadome H."/>
            <person name="Noda Y."/>
            <person name="Adachi H."/>
            <person name="Yoda K."/>
        </authorList>
    </citation>
    <scope>SUBCELLULAR LOCATION</scope>
    <scope>IDENTIFICATION BY MASS SPECTROMETRY</scope>
</reference>
<reference key="6">
    <citation type="journal article" date="2007" name="Exp. Cell Res.">
        <title>Tvp38, Tvp23, Tvp18 and Tvp15: novel membrane proteins in the Tlg2-containing Golgi/endosome compartments of Saccharomyces cerevisiae.</title>
        <authorList>
            <person name="Inadome H."/>
            <person name="Noda Y."/>
            <person name="Kamimura Y."/>
            <person name="Adachi H."/>
            <person name="Yoda K."/>
        </authorList>
    </citation>
    <scope>FUNCTION</scope>
    <scope>SUBCELLULAR LOCATION</scope>
    <scope>INTERACTION WITH TVP15 AND YIP4</scope>
</reference>
<reference key="7">
    <citation type="journal article" date="2007" name="J. Proteome Res.">
        <title>Large-scale phosphorylation analysis of alpha-factor-arrested Saccharomyces cerevisiae.</title>
        <authorList>
            <person name="Li X."/>
            <person name="Gerber S.A."/>
            <person name="Rudner A.D."/>
            <person name="Beausoleil S.A."/>
            <person name="Haas W."/>
            <person name="Villen J."/>
            <person name="Elias J.E."/>
            <person name="Gygi S.P."/>
        </authorList>
    </citation>
    <scope>PHOSPHORYLATION [LARGE SCALE ANALYSIS] AT THR-153</scope>
    <scope>IDENTIFICATION BY MASS SPECTROMETRY [LARGE SCALE ANALYSIS]</scope>
    <source>
        <strain>ADR376</strain>
    </source>
</reference>
<reference key="8">
    <citation type="journal article" date="2009" name="Science">
        <title>Global analysis of Cdk1 substrate phosphorylation sites provides insights into evolution.</title>
        <authorList>
            <person name="Holt L.J."/>
            <person name="Tuch B.B."/>
            <person name="Villen J."/>
            <person name="Johnson A.D."/>
            <person name="Gygi S.P."/>
            <person name="Morgan D.O."/>
        </authorList>
    </citation>
    <scope>PHOSPHORYLATION [LARGE SCALE ANALYSIS] AT THR-146 AND THR-153</scope>
    <scope>IDENTIFICATION BY MASS SPECTROMETRY [LARGE SCALE ANALYSIS]</scope>
</reference>
<sequence length="167" mass="18693">MALSLGQFINVGGMVKDLKSFNFSVYGRWFGYINIILCIALGIANLFHVSGVIAFGIISIIQGLVILFIEIPFLLKICPLSDNFIEFIKRFETNGWRCLFYLAMAIIQYISIAVMATSLIVVAVGLTISSISYAVAYTKHQEFQNTNIIKNPTDDDFPHEAVVREML</sequence>
<proteinExistence type="evidence at protein level"/>
<protein>
    <recommendedName>
        <fullName>Golgi apparatus membrane protein TVP18</fullName>
    </recommendedName>
    <alternativeName>
        <fullName>TLG2 compartment vesicle protein of 18 kDa</fullName>
    </alternativeName>
</protein>